<name>BPT_PARM1</name>
<accession>Q2W440</accession>
<feature type="chain" id="PRO_0000263190" description="Aspartate/glutamate leucyltransferase">
    <location>
        <begin position="1"/>
        <end position="244"/>
    </location>
</feature>
<proteinExistence type="inferred from homology"/>
<dbReference type="EC" id="2.3.2.29" evidence="1"/>
<dbReference type="EMBL" id="AP007255">
    <property type="protein sequence ID" value="BAE51385.1"/>
    <property type="molecule type" value="Genomic_DNA"/>
</dbReference>
<dbReference type="RefSeq" id="WP_011384962.1">
    <property type="nucleotide sequence ID" value="NC_007626.1"/>
</dbReference>
<dbReference type="SMR" id="Q2W440"/>
<dbReference type="STRING" id="342108.amb2581"/>
<dbReference type="KEGG" id="mag:amb2581"/>
<dbReference type="HOGENOM" id="CLU_077607_1_0_5"/>
<dbReference type="OrthoDB" id="9782022at2"/>
<dbReference type="Proteomes" id="UP000007058">
    <property type="component" value="Chromosome"/>
</dbReference>
<dbReference type="GO" id="GO:0005737">
    <property type="term" value="C:cytoplasm"/>
    <property type="evidence" value="ECO:0007669"/>
    <property type="project" value="UniProtKB-SubCell"/>
</dbReference>
<dbReference type="GO" id="GO:0004057">
    <property type="term" value="F:arginyl-tRNA--protein transferase activity"/>
    <property type="evidence" value="ECO:0007669"/>
    <property type="project" value="InterPro"/>
</dbReference>
<dbReference type="GO" id="GO:0008914">
    <property type="term" value="F:leucyl-tRNA--protein transferase activity"/>
    <property type="evidence" value="ECO:0007669"/>
    <property type="project" value="UniProtKB-UniRule"/>
</dbReference>
<dbReference type="GO" id="GO:0071596">
    <property type="term" value="P:ubiquitin-dependent protein catabolic process via the N-end rule pathway"/>
    <property type="evidence" value="ECO:0007669"/>
    <property type="project" value="InterPro"/>
</dbReference>
<dbReference type="HAMAP" id="MF_00689">
    <property type="entry name" value="Bpt"/>
    <property type="match status" value="1"/>
</dbReference>
<dbReference type="InterPro" id="IPR016181">
    <property type="entry name" value="Acyl_CoA_acyltransferase"/>
</dbReference>
<dbReference type="InterPro" id="IPR017138">
    <property type="entry name" value="Asp_Glu_LeuTrfase"/>
</dbReference>
<dbReference type="InterPro" id="IPR030700">
    <property type="entry name" value="N-end_Aminoacyl_Trfase"/>
</dbReference>
<dbReference type="InterPro" id="IPR007472">
    <property type="entry name" value="N-end_Aminoacyl_Trfase_C"/>
</dbReference>
<dbReference type="InterPro" id="IPR007471">
    <property type="entry name" value="N-end_Aminoacyl_Trfase_N"/>
</dbReference>
<dbReference type="NCBIfam" id="NF002341">
    <property type="entry name" value="PRK01305.1-1"/>
    <property type="match status" value="1"/>
</dbReference>
<dbReference type="NCBIfam" id="NF002342">
    <property type="entry name" value="PRK01305.1-3"/>
    <property type="match status" value="1"/>
</dbReference>
<dbReference type="NCBIfam" id="NF002343">
    <property type="entry name" value="PRK01305.1-4"/>
    <property type="match status" value="1"/>
</dbReference>
<dbReference type="NCBIfam" id="NF002346">
    <property type="entry name" value="PRK01305.2-3"/>
    <property type="match status" value="1"/>
</dbReference>
<dbReference type="PANTHER" id="PTHR21367">
    <property type="entry name" value="ARGININE-TRNA-PROTEIN TRANSFERASE 1"/>
    <property type="match status" value="1"/>
</dbReference>
<dbReference type="PANTHER" id="PTHR21367:SF1">
    <property type="entry name" value="ARGINYL-TRNA--PROTEIN TRANSFERASE 1"/>
    <property type="match status" value="1"/>
</dbReference>
<dbReference type="Pfam" id="PF04377">
    <property type="entry name" value="ATE_C"/>
    <property type="match status" value="1"/>
</dbReference>
<dbReference type="Pfam" id="PF04376">
    <property type="entry name" value="ATE_N"/>
    <property type="match status" value="1"/>
</dbReference>
<dbReference type="PIRSF" id="PIRSF037208">
    <property type="entry name" value="ATE_pro_prd"/>
    <property type="match status" value="1"/>
</dbReference>
<dbReference type="SUPFAM" id="SSF55729">
    <property type="entry name" value="Acyl-CoA N-acyltransferases (Nat)"/>
    <property type="match status" value="1"/>
</dbReference>
<comment type="function">
    <text evidence="1">Functions in the N-end rule pathway of protein degradation where it conjugates Leu from its aminoacyl-tRNA to the N-termini of proteins containing an N-terminal aspartate or glutamate.</text>
</comment>
<comment type="catalytic activity">
    <reaction evidence="1">
        <text>N-terminal L-glutamyl-[protein] + L-leucyl-tRNA(Leu) = N-terminal L-leucyl-L-glutamyl-[protein] + tRNA(Leu) + H(+)</text>
        <dbReference type="Rhea" id="RHEA:50412"/>
        <dbReference type="Rhea" id="RHEA-COMP:9613"/>
        <dbReference type="Rhea" id="RHEA-COMP:9622"/>
        <dbReference type="Rhea" id="RHEA-COMP:12664"/>
        <dbReference type="Rhea" id="RHEA-COMP:12668"/>
        <dbReference type="ChEBI" id="CHEBI:15378"/>
        <dbReference type="ChEBI" id="CHEBI:64721"/>
        <dbReference type="ChEBI" id="CHEBI:78442"/>
        <dbReference type="ChEBI" id="CHEBI:78494"/>
        <dbReference type="ChEBI" id="CHEBI:133041"/>
        <dbReference type="EC" id="2.3.2.29"/>
    </reaction>
</comment>
<comment type="catalytic activity">
    <reaction evidence="1">
        <text>N-terminal L-aspartyl-[protein] + L-leucyl-tRNA(Leu) = N-terminal L-leucyl-L-aspartyl-[protein] + tRNA(Leu) + H(+)</text>
        <dbReference type="Rhea" id="RHEA:50420"/>
        <dbReference type="Rhea" id="RHEA-COMP:9613"/>
        <dbReference type="Rhea" id="RHEA-COMP:9622"/>
        <dbReference type="Rhea" id="RHEA-COMP:12669"/>
        <dbReference type="Rhea" id="RHEA-COMP:12674"/>
        <dbReference type="ChEBI" id="CHEBI:15378"/>
        <dbReference type="ChEBI" id="CHEBI:64720"/>
        <dbReference type="ChEBI" id="CHEBI:78442"/>
        <dbReference type="ChEBI" id="CHEBI:78494"/>
        <dbReference type="ChEBI" id="CHEBI:133042"/>
        <dbReference type="EC" id="2.3.2.29"/>
    </reaction>
</comment>
<comment type="subcellular location">
    <subcellularLocation>
        <location evidence="1">Cytoplasm</location>
    </subcellularLocation>
</comment>
<comment type="similarity">
    <text evidence="1">Belongs to the R-transferase family. Bpt subfamily.</text>
</comment>
<sequence length="244" mass="27396">MDHFPLKRPHFFFTTAPLPCPYVSGRLERKIVTELNGTDADSLHEALSRAGFRRSHSIAYTPACPGCSACIPVRIVADDFVPDRTMRRIWRANGGLTASKVPARASADQFRLFARYQESRHSGGDMALMGFYDYRSMVEDSPIDTFIVEFRDGDGNLAAACLADRMNDGLSAVYSFFDPDLASRSLGTFMVLWLVEEAKRMALPFVYLGYWIGESRKMSYKTRYQPLEAFGPDGWKRFAPGDGA</sequence>
<gene>
    <name evidence="1" type="primary">bpt</name>
    <name type="ordered locus">amb2581</name>
</gene>
<reference key="1">
    <citation type="journal article" date="2005" name="DNA Res.">
        <title>Complete genome sequence of the facultative anaerobic magnetotactic bacterium Magnetospirillum sp. strain AMB-1.</title>
        <authorList>
            <person name="Matsunaga T."/>
            <person name="Okamura Y."/>
            <person name="Fukuda Y."/>
            <person name="Wahyudi A.T."/>
            <person name="Murase Y."/>
            <person name="Takeyama H."/>
        </authorList>
    </citation>
    <scope>NUCLEOTIDE SEQUENCE [LARGE SCALE GENOMIC DNA]</scope>
    <source>
        <strain>ATCC 700264 / AMB-1</strain>
    </source>
</reference>
<protein>
    <recommendedName>
        <fullName evidence="1">Aspartate/glutamate leucyltransferase</fullName>
        <ecNumber evidence="1">2.3.2.29</ecNumber>
    </recommendedName>
</protein>
<organism>
    <name type="scientific">Paramagnetospirillum magneticum (strain ATCC 700264 / AMB-1)</name>
    <name type="common">Magnetospirillum magneticum</name>
    <dbReference type="NCBI Taxonomy" id="342108"/>
    <lineage>
        <taxon>Bacteria</taxon>
        <taxon>Pseudomonadati</taxon>
        <taxon>Pseudomonadota</taxon>
        <taxon>Alphaproteobacteria</taxon>
        <taxon>Rhodospirillales</taxon>
        <taxon>Magnetospirillaceae</taxon>
        <taxon>Paramagnetospirillum</taxon>
    </lineage>
</organism>
<keyword id="KW-0012">Acyltransferase</keyword>
<keyword id="KW-0963">Cytoplasm</keyword>
<keyword id="KW-0808">Transferase</keyword>
<evidence type="ECO:0000255" key="1">
    <source>
        <dbReference type="HAMAP-Rule" id="MF_00689"/>
    </source>
</evidence>